<organism>
    <name type="scientific">Mus musculus</name>
    <name type="common">Mouse</name>
    <dbReference type="NCBI Taxonomy" id="10090"/>
    <lineage>
        <taxon>Eukaryota</taxon>
        <taxon>Metazoa</taxon>
        <taxon>Chordata</taxon>
        <taxon>Craniata</taxon>
        <taxon>Vertebrata</taxon>
        <taxon>Euteleostomi</taxon>
        <taxon>Mammalia</taxon>
        <taxon>Eutheria</taxon>
        <taxon>Euarchontoglires</taxon>
        <taxon>Glires</taxon>
        <taxon>Rodentia</taxon>
        <taxon>Myomorpha</taxon>
        <taxon>Muroidea</taxon>
        <taxon>Muridae</taxon>
        <taxon>Murinae</taxon>
        <taxon>Mus</taxon>
        <taxon>Mus</taxon>
    </lineage>
</organism>
<dbReference type="EMBL" id="X57349">
    <property type="protein sequence ID" value="CAA40624.1"/>
    <property type="molecule type" value="mRNA"/>
</dbReference>
<dbReference type="EMBL" id="BC054522">
    <property type="protein sequence ID" value="AAH54522.1"/>
    <property type="molecule type" value="mRNA"/>
</dbReference>
<dbReference type="EMBL" id="M29618">
    <property type="protein sequence ID" value="AAA37616.1"/>
    <property type="molecule type" value="mRNA"/>
</dbReference>
<dbReference type="CCDS" id="CCDS28123.1"/>
<dbReference type="PIR" id="S29548">
    <property type="entry name" value="S29548"/>
</dbReference>
<dbReference type="RefSeq" id="NP_001344227.1">
    <property type="nucleotide sequence ID" value="NM_001357298.1"/>
</dbReference>
<dbReference type="RefSeq" id="NP_035768.1">
    <property type="nucleotide sequence ID" value="NM_011638.4"/>
</dbReference>
<dbReference type="RefSeq" id="XP_006522062.1">
    <property type="nucleotide sequence ID" value="XM_006521999.3"/>
</dbReference>
<dbReference type="SMR" id="Q62351"/>
<dbReference type="BioGRID" id="204314">
    <property type="interactions" value="20"/>
</dbReference>
<dbReference type="FunCoup" id="Q62351">
    <property type="interactions" value="1356"/>
</dbReference>
<dbReference type="IntAct" id="Q62351">
    <property type="interactions" value="11"/>
</dbReference>
<dbReference type="MINT" id="Q62351"/>
<dbReference type="STRING" id="10090.ENSMUSP00000023486"/>
<dbReference type="MEROPS" id="M28.972"/>
<dbReference type="GlyConnect" id="2776">
    <property type="glycosylation" value="3 N-Linked glycans (2 sites)"/>
</dbReference>
<dbReference type="GlyCosmos" id="Q62351">
    <property type="glycosylation" value="5 sites, 3 glycans"/>
</dbReference>
<dbReference type="GlyGen" id="Q62351">
    <property type="glycosylation" value="6 sites, 6 N-linked glycans (3 sites), 1 O-linked glycan (1 site)"/>
</dbReference>
<dbReference type="iPTMnet" id="Q62351"/>
<dbReference type="PhosphoSitePlus" id="Q62351"/>
<dbReference type="SwissPalm" id="Q62351"/>
<dbReference type="jPOST" id="Q62351"/>
<dbReference type="PaxDb" id="10090-ENSMUSP00000023486"/>
<dbReference type="ProteomicsDB" id="263168"/>
<dbReference type="Pumba" id="Q62351"/>
<dbReference type="ABCD" id="Q62351">
    <property type="antibodies" value="92 sequenced antibodies"/>
</dbReference>
<dbReference type="Antibodypedia" id="4559">
    <property type="antibodies" value="3139 antibodies from 49 providers"/>
</dbReference>
<dbReference type="DNASU" id="22042"/>
<dbReference type="Ensembl" id="ENSMUST00000023486.15">
    <property type="protein sequence ID" value="ENSMUSP00000023486.9"/>
    <property type="gene ID" value="ENSMUSG00000022797.17"/>
</dbReference>
<dbReference type="GeneID" id="22042"/>
<dbReference type="KEGG" id="mmu:22042"/>
<dbReference type="UCSC" id="uc007yza.2">
    <property type="organism name" value="mouse"/>
</dbReference>
<dbReference type="AGR" id="MGI:98822"/>
<dbReference type="CTD" id="7037"/>
<dbReference type="MGI" id="MGI:98822">
    <property type="gene designation" value="Tfrc"/>
</dbReference>
<dbReference type="VEuPathDB" id="HostDB:ENSMUSG00000022797"/>
<dbReference type="eggNOG" id="KOG2195">
    <property type="taxonomic scope" value="Eukaryota"/>
</dbReference>
<dbReference type="GeneTree" id="ENSGT01030000234598"/>
<dbReference type="HOGENOM" id="CLU_005688_5_0_1"/>
<dbReference type="InParanoid" id="Q62351"/>
<dbReference type="OMA" id="YQDSNWI"/>
<dbReference type="OrthoDB" id="5841748at2759"/>
<dbReference type="PhylomeDB" id="Q62351"/>
<dbReference type="TreeFam" id="TF312981"/>
<dbReference type="Reactome" id="R-MMU-432722">
    <property type="pathway name" value="Golgi Associated Vesicle Biogenesis"/>
</dbReference>
<dbReference type="Reactome" id="R-MMU-8856825">
    <property type="pathway name" value="Cargo recognition for clathrin-mediated endocytosis"/>
</dbReference>
<dbReference type="Reactome" id="R-MMU-8856828">
    <property type="pathway name" value="Clathrin-mediated endocytosis"/>
</dbReference>
<dbReference type="Reactome" id="R-MMU-8980692">
    <property type="pathway name" value="RHOA GTPase cycle"/>
</dbReference>
<dbReference type="Reactome" id="R-MMU-9013026">
    <property type="pathway name" value="RHOB GTPase cycle"/>
</dbReference>
<dbReference type="Reactome" id="R-MMU-9013106">
    <property type="pathway name" value="RHOC GTPase cycle"/>
</dbReference>
<dbReference type="Reactome" id="R-MMU-9013149">
    <property type="pathway name" value="RAC1 GTPase cycle"/>
</dbReference>
<dbReference type="Reactome" id="R-MMU-9013404">
    <property type="pathway name" value="RAC2 GTPase cycle"/>
</dbReference>
<dbReference type="Reactome" id="R-MMU-9013406">
    <property type="pathway name" value="RHOQ GTPase cycle"/>
</dbReference>
<dbReference type="Reactome" id="R-MMU-9013407">
    <property type="pathway name" value="RHOH GTPase cycle"/>
</dbReference>
<dbReference type="Reactome" id="R-MMU-9013408">
    <property type="pathway name" value="RHOG GTPase cycle"/>
</dbReference>
<dbReference type="Reactome" id="R-MMU-9013423">
    <property type="pathway name" value="RAC3 GTPase cycle"/>
</dbReference>
<dbReference type="Reactome" id="R-MMU-917977">
    <property type="pathway name" value="Transferrin endocytosis and recycling"/>
</dbReference>
<dbReference type="Reactome" id="R-MMU-9696270">
    <property type="pathway name" value="RND2 GTPase cycle"/>
</dbReference>
<dbReference type="Reactome" id="R-MMU-9696273">
    <property type="pathway name" value="RND1 GTPase cycle"/>
</dbReference>
<dbReference type="BioGRID-ORCS" id="22042">
    <property type="hits" value="40 hits in 117 CRISPR screens"/>
</dbReference>
<dbReference type="ChiTaRS" id="Tfrc">
    <property type="organism name" value="mouse"/>
</dbReference>
<dbReference type="PRO" id="PR:Q62351"/>
<dbReference type="Proteomes" id="UP000000589">
    <property type="component" value="Chromosome 16"/>
</dbReference>
<dbReference type="RNAct" id="Q62351">
    <property type="molecule type" value="protein"/>
</dbReference>
<dbReference type="Bgee" id="ENSMUSG00000022797">
    <property type="expression patterns" value="Expressed in placenta labyrinth and 269 other cell types or tissues"/>
</dbReference>
<dbReference type="ExpressionAtlas" id="Q62351">
    <property type="expression patterns" value="baseline and differential"/>
</dbReference>
<dbReference type="GO" id="GO:0016323">
    <property type="term" value="C:basolateral plasma membrane"/>
    <property type="evidence" value="ECO:0007669"/>
    <property type="project" value="Ensembl"/>
</dbReference>
<dbReference type="GO" id="GO:0009986">
    <property type="term" value="C:cell surface"/>
    <property type="evidence" value="ECO:0000314"/>
    <property type="project" value="MGI"/>
</dbReference>
<dbReference type="GO" id="GO:0005905">
    <property type="term" value="C:clathrin-coated pit"/>
    <property type="evidence" value="ECO:0000314"/>
    <property type="project" value="MGI"/>
</dbReference>
<dbReference type="GO" id="GO:0031410">
    <property type="term" value="C:cytoplasmic vesicle"/>
    <property type="evidence" value="ECO:0000266"/>
    <property type="project" value="MGI"/>
</dbReference>
<dbReference type="GO" id="GO:0005769">
    <property type="term" value="C:early endosome"/>
    <property type="evidence" value="ECO:0000314"/>
    <property type="project" value="MGI"/>
</dbReference>
<dbReference type="GO" id="GO:0005768">
    <property type="term" value="C:endosome"/>
    <property type="evidence" value="ECO:0000314"/>
    <property type="project" value="MGI"/>
</dbReference>
<dbReference type="GO" id="GO:0009897">
    <property type="term" value="C:external side of plasma membrane"/>
    <property type="evidence" value="ECO:0000314"/>
    <property type="project" value="MGI"/>
</dbReference>
<dbReference type="GO" id="GO:0070062">
    <property type="term" value="C:extracellular exosome"/>
    <property type="evidence" value="ECO:0000314"/>
    <property type="project" value="MGI"/>
</dbReference>
<dbReference type="GO" id="GO:0098978">
    <property type="term" value="C:glutamatergic synapse"/>
    <property type="evidence" value="ECO:0007669"/>
    <property type="project" value="Ensembl"/>
</dbReference>
<dbReference type="GO" id="GO:1990712">
    <property type="term" value="C:HFE-transferrin receptor complex"/>
    <property type="evidence" value="ECO:0000314"/>
    <property type="project" value="BHF-UCL"/>
</dbReference>
<dbReference type="GO" id="GO:0042470">
    <property type="term" value="C:melanosome"/>
    <property type="evidence" value="ECO:0007669"/>
    <property type="project" value="UniProtKB-SubCell"/>
</dbReference>
<dbReference type="GO" id="GO:0016020">
    <property type="term" value="C:membrane"/>
    <property type="evidence" value="ECO:0000315"/>
    <property type="project" value="ParkinsonsUK-UCL"/>
</dbReference>
<dbReference type="GO" id="GO:0048471">
    <property type="term" value="C:perinuclear region of cytoplasm"/>
    <property type="evidence" value="ECO:0000314"/>
    <property type="project" value="MGI"/>
</dbReference>
<dbReference type="GO" id="GO:0005886">
    <property type="term" value="C:plasma membrane"/>
    <property type="evidence" value="ECO:0000314"/>
    <property type="project" value="MGI"/>
</dbReference>
<dbReference type="GO" id="GO:0098794">
    <property type="term" value="C:postsynapse"/>
    <property type="evidence" value="ECO:0000314"/>
    <property type="project" value="SynGO"/>
</dbReference>
<dbReference type="GO" id="GO:0098944">
    <property type="term" value="C:postsynaptic recycling endosome membrane"/>
    <property type="evidence" value="ECO:0007669"/>
    <property type="project" value="Ensembl"/>
</dbReference>
<dbReference type="GO" id="GO:0055037">
    <property type="term" value="C:recycling endosome"/>
    <property type="evidence" value="ECO:0000314"/>
    <property type="project" value="MGI"/>
</dbReference>
<dbReference type="GO" id="GO:0055038">
    <property type="term" value="C:recycling endosome membrane"/>
    <property type="evidence" value="ECO:0007669"/>
    <property type="project" value="Ensembl"/>
</dbReference>
<dbReference type="GO" id="GO:0003725">
    <property type="term" value="F:double-stranded RNA binding"/>
    <property type="evidence" value="ECO:0000266"/>
    <property type="project" value="MGI"/>
</dbReference>
<dbReference type="GO" id="GO:0030544">
    <property type="term" value="F:Hsp70 protein binding"/>
    <property type="evidence" value="ECO:0007669"/>
    <property type="project" value="Ensembl"/>
</dbReference>
<dbReference type="GO" id="GO:0005381">
    <property type="term" value="F:iron ion transmembrane transporter activity"/>
    <property type="evidence" value="ECO:0000304"/>
    <property type="project" value="MGI"/>
</dbReference>
<dbReference type="GO" id="GO:0042803">
    <property type="term" value="F:protein homodimerization activity"/>
    <property type="evidence" value="ECO:0007669"/>
    <property type="project" value="Ensembl"/>
</dbReference>
<dbReference type="GO" id="GO:0019901">
    <property type="term" value="F:protein kinase binding"/>
    <property type="evidence" value="ECO:0007669"/>
    <property type="project" value="Ensembl"/>
</dbReference>
<dbReference type="GO" id="GO:0044877">
    <property type="term" value="F:protein-containing complex binding"/>
    <property type="evidence" value="ECO:0007669"/>
    <property type="project" value="Ensembl"/>
</dbReference>
<dbReference type="GO" id="GO:0004998">
    <property type="term" value="F:transferrin receptor activity"/>
    <property type="evidence" value="ECO:0000250"/>
    <property type="project" value="UniProtKB"/>
</dbReference>
<dbReference type="GO" id="GO:0006953">
    <property type="term" value="P:acute-phase response"/>
    <property type="evidence" value="ECO:0007669"/>
    <property type="project" value="Ensembl"/>
</dbReference>
<dbReference type="GO" id="GO:0071281">
    <property type="term" value="P:cellular response to iron ion"/>
    <property type="evidence" value="ECO:0000304"/>
    <property type="project" value="BHF-UCL"/>
</dbReference>
<dbReference type="GO" id="GO:1990830">
    <property type="term" value="P:cellular response to leukemia inhibitory factor"/>
    <property type="evidence" value="ECO:0000270"/>
    <property type="project" value="MGI"/>
</dbReference>
<dbReference type="GO" id="GO:0071466">
    <property type="term" value="P:cellular response to xenobiotic stimulus"/>
    <property type="evidence" value="ECO:0000266"/>
    <property type="project" value="MGI"/>
</dbReference>
<dbReference type="GO" id="GO:0006879">
    <property type="term" value="P:intracellular iron ion homeostasis"/>
    <property type="evidence" value="ECO:0000315"/>
    <property type="project" value="MGI"/>
</dbReference>
<dbReference type="GO" id="GO:0035556">
    <property type="term" value="P:intracellular signal transduction"/>
    <property type="evidence" value="ECO:0007669"/>
    <property type="project" value="Ensembl"/>
</dbReference>
<dbReference type="GO" id="GO:0060586">
    <property type="term" value="P:multicellular organismal-level iron ion homeostasis"/>
    <property type="evidence" value="ECO:0007669"/>
    <property type="project" value="Ensembl"/>
</dbReference>
<dbReference type="GO" id="GO:0043066">
    <property type="term" value="P:negative regulation of apoptotic process"/>
    <property type="evidence" value="ECO:0007669"/>
    <property type="project" value="Ensembl"/>
</dbReference>
<dbReference type="GO" id="GO:0010637">
    <property type="term" value="P:negative regulation of mitochondrial fusion"/>
    <property type="evidence" value="ECO:0007669"/>
    <property type="project" value="Ensembl"/>
</dbReference>
<dbReference type="GO" id="GO:0030316">
    <property type="term" value="P:osteoclast differentiation"/>
    <property type="evidence" value="ECO:0000315"/>
    <property type="project" value="DFLAT"/>
</dbReference>
<dbReference type="GO" id="GO:0030890">
    <property type="term" value="P:positive regulation of B cell proliferation"/>
    <property type="evidence" value="ECO:0000314"/>
    <property type="project" value="UniProtKB"/>
</dbReference>
<dbReference type="GO" id="GO:0043123">
    <property type="term" value="P:positive regulation of canonical NF-kappaB signal transduction"/>
    <property type="evidence" value="ECO:0007669"/>
    <property type="project" value="Ensembl"/>
</dbReference>
<dbReference type="GO" id="GO:0045830">
    <property type="term" value="P:positive regulation of isotype switching"/>
    <property type="evidence" value="ECO:0000250"/>
    <property type="project" value="UniProtKB"/>
</dbReference>
<dbReference type="GO" id="GO:1900182">
    <property type="term" value="P:positive regulation of protein localization to nucleus"/>
    <property type="evidence" value="ECO:0007669"/>
    <property type="project" value="Ensembl"/>
</dbReference>
<dbReference type="GO" id="GO:0031334">
    <property type="term" value="P:positive regulation of protein-containing complex assembly"/>
    <property type="evidence" value="ECO:0007669"/>
    <property type="project" value="Ensembl"/>
</dbReference>
<dbReference type="GO" id="GO:0042102">
    <property type="term" value="P:positive regulation of T cell proliferation"/>
    <property type="evidence" value="ECO:0000314"/>
    <property type="project" value="UniProtKB"/>
</dbReference>
<dbReference type="GO" id="GO:0031623">
    <property type="term" value="P:receptor internalization"/>
    <property type="evidence" value="ECO:0000250"/>
    <property type="project" value="UniProtKB"/>
</dbReference>
<dbReference type="GO" id="GO:0099072">
    <property type="term" value="P:regulation of postsynaptic membrane neurotransmitter receptor levels"/>
    <property type="evidence" value="ECO:0000314"/>
    <property type="project" value="SynGO"/>
</dbReference>
<dbReference type="GO" id="GO:0046688">
    <property type="term" value="P:response to copper ion"/>
    <property type="evidence" value="ECO:0007669"/>
    <property type="project" value="Ensembl"/>
</dbReference>
<dbReference type="GO" id="GO:0001666">
    <property type="term" value="P:response to hypoxia"/>
    <property type="evidence" value="ECO:0007669"/>
    <property type="project" value="Ensembl"/>
</dbReference>
<dbReference type="GO" id="GO:0010042">
    <property type="term" value="P:response to manganese ion"/>
    <property type="evidence" value="ECO:0007669"/>
    <property type="project" value="Ensembl"/>
</dbReference>
<dbReference type="GO" id="GO:0007584">
    <property type="term" value="P:response to nutrient"/>
    <property type="evidence" value="ECO:0007669"/>
    <property type="project" value="Ensembl"/>
</dbReference>
<dbReference type="GO" id="GO:0032526">
    <property type="term" value="P:response to retinoic acid"/>
    <property type="evidence" value="ECO:0007669"/>
    <property type="project" value="Ensembl"/>
</dbReference>
<dbReference type="GO" id="GO:0033572">
    <property type="term" value="P:transferrin transport"/>
    <property type="evidence" value="ECO:0000250"/>
    <property type="project" value="UniProtKB"/>
</dbReference>
<dbReference type="CDD" id="cd09848">
    <property type="entry name" value="M28_TfR"/>
    <property type="match status" value="1"/>
</dbReference>
<dbReference type="CDD" id="cd02128">
    <property type="entry name" value="PA_TfR"/>
    <property type="match status" value="1"/>
</dbReference>
<dbReference type="FunFam" id="1.20.930.40:FF:000002">
    <property type="entry name" value="Transferrin receptor protein 1"/>
    <property type="match status" value="1"/>
</dbReference>
<dbReference type="FunFam" id="3.40.630.10:FF:000045">
    <property type="entry name" value="Transferrin receptor protein 1"/>
    <property type="match status" value="1"/>
</dbReference>
<dbReference type="FunFam" id="3.50.30.30:FF:000010">
    <property type="entry name" value="Transferrin receptor protein 1"/>
    <property type="match status" value="1"/>
</dbReference>
<dbReference type="Gene3D" id="3.50.30.30">
    <property type="match status" value="1"/>
</dbReference>
<dbReference type="Gene3D" id="1.20.930.40">
    <property type="entry name" value="Transferrin receptor-like, dimerisation domain"/>
    <property type="match status" value="1"/>
</dbReference>
<dbReference type="Gene3D" id="3.40.630.10">
    <property type="entry name" value="Zn peptidases"/>
    <property type="match status" value="1"/>
</dbReference>
<dbReference type="InterPro" id="IPR046450">
    <property type="entry name" value="PA_dom_sf"/>
</dbReference>
<dbReference type="InterPro" id="IPR003137">
    <property type="entry name" value="PA_domain"/>
</dbReference>
<dbReference type="InterPro" id="IPR007484">
    <property type="entry name" value="Peptidase_M28"/>
</dbReference>
<dbReference type="InterPro" id="IPR039373">
    <property type="entry name" value="Peptidase_M28B"/>
</dbReference>
<dbReference type="InterPro" id="IPR007365">
    <property type="entry name" value="TFR-like_dimer_dom"/>
</dbReference>
<dbReference type="InterPro" id="IPR036757">
    <property type="entry name" value="TFR-like_dimer_dom_sf"/>
</dbReference>
<dbReference type="InterPro" id="IPR037324">
    <property type="entry name" value="TfR1/2_PA"/>
</dbReference>
<dbReference type="PANTHER" id="PTHR10404">
    <property type="entry name" value="N-ACETYLATED-ALPHA-LINKED ACIDIC DIPEPTIDASE"/>
    <property type="match status" value="1"/>
</dbReference>
<dbReference type="PANTHER" id="PTHR10404:SF26">
    <property type="entry name" value="TRANSFERRIN RECEPTOR PROTEIN 1"/>
    <property type="match status" value="1"/>
</dbReference>
<dbReference type="Pfam" id="PF02225">
    <property type="entry name" value="PA"/>
    <property type="match status" value="1"/>
</dbReference>
<dbReference type="Pfam" id="PF04389">
    <property type="entry name" value="Peptidase_M28"/>
    <property type="match status" value="1"/>
</dbReference>
<dbReference type="Pfam" id="PF04253">
    <property type="entry name" value="TFR_dimer"/>
    <property type="match status" value="1"/>
</dbReference>
<dbReference type="SUPFAM" id="SSF52025">
    <property type="entry name" value="PA domain"/>
    <property type="match status" value="1"/>
</dbReference>
<dbReference type="SUPFAM" id="SSF47672">
    <property type="entry name" value="Transferrin receptor-like dimerisation domain"/>
    <property type="match status" value="1"/>
</dbReference>
<dbReference type="SUPFAM" id="SSF53187">
    <property type="entry name" value="Zn-dependent exopeptidases"/>
    <property type="match status" value="1"/>
</dbReference>
<feature type="chain" id="PRO_0000174133" description="Transferrin receptor protein 1">
    <location>
        <begin position="1"/>
        <end position="763"/>
    </location>
</feature>
<feature type="topological domain" description="Cytoplasmic" evidence="3">
    <location>
        <begin position="1"/>
        <end position="67"/>
    </location>
</feature>
<feature type="transmembrane region" description="Helical; Signal-anchor for type II membrane protein" evidence="3">
    <location>
        <begin position="68"/>
        <end position="88"/>
    </location>
</feature>
<feature type="topological domain" description="Extracellular" evidence="3">
    <location>
        <begin position="89"/>
        <end position="763"/>
    </location>
</feature>
<feature type="domain" description="PA">
    <location>
        <begin position="225"/>
        <end position="315"/>
    </location>
</feature>
<feature type="region of interest" description="Mediates interaction with SH3BP4" evidence="1">
    <location>
        <begin position="1"/>
        <end position="67"/>
    </location>
</feature>
<feature type="region of interest" description="Ligand-binding" evidence="1">
    <location>
        <begin position="572"/>
        <end position="763"/>
    </location>
</feature>
<feature type="short sequence motif" description="Endocytosis signal">
    <location>
        <begin position="20"/>
        <end position="23"/>
    </location>
</feature>
<feature type="short sequence motif" description="Stop-transfer sequence">
    <location>
        <begin position="58"/>
        <end position="61"/>
    </location>
</feature>
<feature type="short sequence motif" description="Cell attachment site" evidence="3">
    <location>
        <begin position="649"/>
        <end position="651"/>
    </location>
</feature>
<feature type="modified residue" description="Phosphoserine" evidence="2">
    <location>
        <position position="10"/>
    </location>
</feature>
<feature type="modified residue" description="Phosphoserine" evidence="11">
    <location>
        <position position="19"/>
    </location>
</feature>
<feature type="modified residue" description="Phosphotyrosine" evidence="9 10">
    <location>
        <position position="20"/>
    </location>
</feature>
<feature type="modified residue" description="Phosphothreonine" evidence="2">
    <location>
        <position position="21"/>
    </location>
</feature>
<feature type="modified residue" description="Phosphoserine" evidence="2">
    <location>
        <position position="24"/>
    </location>
</feature>
<feature type="lipid moiety-binding region" description="S-palmitoyl cysteine" evidence="1">
    <location>
        <position position="67"/>
    </location>
</feature>
<feature type="glycosylation site" description="O-linked (GalNAc...) threonine" evidence="1">
    <location>
        <position position="104"/>
    </location>
</feature>
<feature type="glycosylation site" description="N-linked (GlcNAc...) asparagine" evidence="2">
    <location>
        <position position="253"/>
    </location>
</feature>
<feature type="glycosylation site" description="N-linked (GlcNAc...) asparagine" evidence="2">
    <location>
        <position position="319"/>
    </location>
</feature>
<feature type="glycosylation site" description="N-linked (GlcNAc...) asparagine" evidence="5">
    <location>
        <position position="725"/>
    </location>
</feature>
<feature type="glycosylation site" description="N-linked (GlcNAc...) asparagine" evidence="5">
    <location>
        <position position="730"/>
    </location>
</feature>
<feature type="disulfide bond" description="Interchain" evidence="1">
    <location>
        <position position="89"/>
    </location>
</feature>
<feature type="disulfide bond" description="Interchain" evidence="1">
    <location>
        <position position="98"/>
    </location>
</feature>
<feature type="mutagenesis site" description="Negatively regulates of T and B cell proliferation upon activation. Significantly increases cell surface expression on T and B cells. Impairs internalization." evidence="6">
    <original>Y</original>
    <variation>H</variation>
    <location>
        <position position="20"/>
    </location>
</feature>
<feature type="sequence conflict" description="In Ref. 3; AAA37616." evidence="8" ref="3">
    <original>LA</original>
    <variation>AL</variation>
    <location>
        <begin position="25"/>
        <end position="26"/>
    </location>
</feature>
<feature type="sequence conflict" description="In Ref. 4; AA sequence." evidence="8" ref="4">
    <original>W</original>
    <variation>H</variation>
    <location>
        <position position="743"/>
    </location>
</feature>
<feature type="sequence conflict" description="In Ref. 4; AA sequence." evidence="8" ref="4">
    <original>W</original>
    <variation>I</variation>
    <location>
        <position position="757"/>
    </location>
</feature>
<gene>
    <name type="primary">Tfrc</name>
    <name type="synonym">Trfr</name>
</gene>
<accession>Q62351</accession>
<accession>Q61560</accession>
<sequence>MMDQARSAFSNLFGGEPLSYTRFSLARQVDGDNSHVEMKLAADEEENADNNMKASVRKPKRFNGRLCFAAIALVIFFLIGFMSGYLGYCKRVEQKEECVKLAETEETDKSETMETEDVPTSSRLYWADLKTLLSEKLNSIEFADTIKQLSQNTYTPREAGSQKDESLAYYIENQFHEFKFSKVWRDEHYVKIQVKSSIGQNMVTIVQSNGNLDPVESPEGYVAFSKPTEVSGKLVHANFGTKKDFEELSYSVNGSLVIVRAGEITFAEKVANAQSFNAIGVLIYMDKNKFPVVEADLALFGHAHLGTGDPYTPGFPSFNHTQFPPSQSSGLPNIPVQTISRAAAEKLFGKMEGSCPARWNIDSSCKLELSQNQNVKLIVKNVLKERRILNIFGVIKGYEEPDRYVVVGAQRDALGAGVAAKSSVGTGLLLKLAQVFSDMISKDGFRPSRSIIFASWTAGDFGAVGATEWLEGYLSSLHLKAFTYINLDKVVLGTSNFKVSASPLLYTLMGKIMQDVKHPVDGKSLYRDSNWISKVEKLSFDNAAYPFLAYSGIPAVSFCFCEDADYPYLGTRLDTYEALTQKVPQLNQMVRTAAEVAGQLIIKLTHDVELNLDYEMYNSKLLSFMKDLNQFKTDIRDMGLSLQWLYSARGDYFRATSRLTTDFHNAEKTNRFVMREINDRIMKVEYHFLSPYVSPRESPFRHIFWGSGSHTLSALVENLKLRQKNITAFNETLFRNQLALATWTIQGVANALSGDIWNIDNEF</sequence>
<protein>
    <recommendedName>
        <fullName>Transferrin receptor protein 1</fullName>
        <shortName>TR</shortName>
        <shortName>TfR</shortName>
        <shortName>TfR1</shortName>
        <shortName>Trfr</shortName>
    </recommendedName>
    <cdAntigenName>CD71</cdAntigenName>
</protein>
<reference key="1">
    <citation type="submission" date="1991-01" db="EMBL/GenBank/DDBJ databases">
        <authorList>
            <person name="Trowbridge I.S."/>
            <person name="Domingo D.L."/>
            <person name="Thomas M.L."/>
            <person name="Chain A."/>
        </authorList>
    </citation>
    <scope>NUCLEOTIDE SEQUENCE [MRNA]</scope>
    <source>
        <strain>C57BL/6 X DBA/2</strain>
        <tissue>Hematopoietic</tissue>
    </source>
</reference>
<reference key="2">
    <citation type="journal article" date="2004" name="Genome Res.">
        <title>The status, quality, and expansion of the NIH full-length cDNA project: the Mammalian Gene Collection (MGC).</title>
        <authorList>
            <consortium name="The MGC Project Team"/>
        </authorList>
    </citation>
    <scope>NUCLEOTIDE SEQUENCE [LARGE SCALE MRNA]</scope>
    <source>
        <strain>C57BL/6J</strain>
        <tissue>Brain</tissue>
    </source>
</reference>
<reference key="3">
    <citation type="journal article" date="1985" name="J. Immunol.">
        <title>cDNA cloning of the murine transferrin receptor: sequence of trans-membrane and adjacent regions.</title>
        <authorList>
            <person name="Stearne P.A."/>
            <person name="Pietersz G.A."/>
            <person name="Goding J.W."/>
        </authorList>
    </citation>
    <scope>NUCLEOTIDE SEQUENCE [MRNA] OF 25-301</scope>
    <source>
        <tissue>Myeloma</tissue>
    </source>
</reference>
<reference key="4">
    <citation type="journal article" date="1984" name="J. Immunol.">
        <title>The receptor for transferrin on murine myeloma cells: one-step purification based on its physiology, and partial amino acid sequence.</title>
        <authorList>
            <person name="van Driel I.R."/>
            <person name="Stearne P.A."/>
            <person name="Grego B."/>
            <person name="Simpson R.J."/>
            <person name="Goding J.W."/>
        </authorList>
    </citation>
    <scope>PROTEIN SEQUENCE OF 7-19; 158-179; 196-208; 450-467 AND 736-759</scope>
    <source>
        <tissue>Myeloma</tissue>
    </source>
</reference>
<reference key="5">
    <citation type="journal article" date="1999" name="Nat. Genet.">
        <title>Transferrin receptor is necessary for development of erythrocytes and the nervous system.</title>
        <authorList>
            <person name="Levy J.E."/>
            <person name="Jin O."/>
            <person name="Fujiwara Y."/>
            <person name="Kuo F."/>
            <person name="Andrews N.C."/>
        </authorList>
    </citation>
    <scope>FUNCTION</scope>
</reference>
<reference key="6">
    <citation type="journal article" date="2007" name="J. Immunol.">
        <title>Quantitative time-resolved phosphoproteomic analysis of mast cell signaling.</title>
        <authorList>
            <person name="Cao L."/>
            <person name="Yu K."/>
            <person name="Banh C."/>
            <person name="Nguyen V."/>
            <person name="Ritz A."/>
            <person name="Raphael B.J."/>
            <person name="Kawakami Y."/>
            <person name="Kawakami T."/>
            <person name="Salomon A.R."/>
        </authorList>
    </citation>
    <scope>PHOSPHORYLATION [LARGE SCALE ANALYSIS] AT TYR-20</scope>
    <scope>IDENTIFICATION BY MASS SPECTROMETRY [LARGE SCALE ANALYSIS]</scope>
    <source>
        <tissue>Mast cell</tissue>
    </source>
</reference>
<reference key="7">
    <citation type="journal article" date="2009" name="Mol. Cell. Proteomics">
        <title>Large scale localization of protein phosphorylation by use of electron capture dissociation mass spectrometry.</title>
        <authorList>
            <person name="Sweet S.M."/>
            <person name="Bailey C.M."/>
            <person name="Cunningham D.L."/>
            <person name="Heath J.K."/>
            <person name="Cooper H.J."/>
        </authorList>
    </citation>
    <scope>PHOSPHORYLATION [LARGE SCALE ANALYSIS] AT TYR-20</scope>
    <scope>IDENTIFICATION BY MASS SPECTROMETRY [LARGE SCALE ANALYSIS]</scope>
    <source>
        <tissue>Embryonic fibroblast</tissue>
    </source>
</reference>
<reference key="8">
    <citation type="journal article" date="2009" name="Nat. Biotechnol.">
        <title>Mass-spectrometric identification and relative quantification of N-linked cell surface glycoproteins.</title>
        <authorList>
            <person name="Wollscheid B."/>
            <person name="Bausch-Fluck D."/>
            <person name="Henderson C."/>
            <person name="O'Brien R."/>
            <person name="Bibel M."/>
            <person name="Schiess R."/>
            <person name="Aebersold R."/>
            <person name="Watts J.D."/>
        </authorList>
    </citation>
    <scope>GLYCOSYLATION [LARGE SCALE ANALYSIS] AT ASN-725 AND ASN-730</scope>
</reference>
<reference key="9">
    <citation type="journal article" date="2010" name="Cell">
        <title>A tissue-specific atlas of mouse protein phosphorylation and expression.</title>
        <authorList>
            <person name="Huttlin E.L."/>
            <person name="Jedrychowski M.P."/>
            <person name="Elias J.E."/>
            <person name="Goswami T."/>
            <person name="Rad R."/>
            <person name="Beausoleil S.A."/>
            <person name="Villen J."/>
            <person name="Haas W."/>
            <person name="Sowa M.E."/>
            <person name="Gygi S.P."/>
        </authorList>
    </citation>
    <scope>PHOSPHORYLATION [LARGE SCALE ANALYSIS] AT SER-19</scope>
    <scope>IDENTIFICATION BY MASS SPECTROMETRY [LARGE SCALE ANALYSIS]</scope>
    <source>
        <tissue>Brain</tissue>
        <tissue>Brown adipose tissue</tissue>
        <tissue>Heart</tissue>
        <tissue>Kidney</tissue>
        <tissue>Liver</tissue>
        <tissue>Lung</tissue>
        <tissue>Pancreas</tissue>
        <tissue>Spleen</tissue>
        <tissue>Testis</tissue>
    </source>
</reference>
<reference key="10">
    <citation type="journal article" date="2016" name="Nat. Genet.">
        <title>A missense mutation in TFRC, encoding transferrin receptor 1, causes combined immunodeficiency.</title>
        <authorList>
            <person name="Jabara H.H."/>
            <person name="Boyden S.E."/>
            <person name="Chou J."/>
            <person name="Ramesh N."/>
            <person name="Massaad M.J."/>
            <person name="Benson H."/>
            <person name="Bainter W."/>
            <person name="Fraulino D."/>
            <person name="Rahimov F."/>
            <person name="Sieff C."/>
            <person name="Liu Z.J."/>
            <person name="Alshemmari S.H."/>
            <person name="Al-Ramadi B.K."/>
            <person name="Al-Dhekri H."/>
            <person name="Arnaout R."/>
            <person name="Abu-Shukair M."/>
            <person name="Vatsayan A."/>
            <person name="Silver E."/>
            <person name="Ahuja S."/>
            <person name="Davies E.G."/>
            <person name="Sola-Visner M."/>
            <person name="Ohsumi T.K."/>
            <person name="Andrews N.C."/>
            <person name="Notarangelo L.D."/>
            <person name="Fleming M.D."/>
            <person name="Al-Herz W."/>
            <person name="Kunkel L.M."/>
            <person name="Geha R.S."/>
        </authorList>
    </citation>
    <scope>MUTAGENESIS OF TYR-20</scope>
    <scope>FUNCTION</scope>
</reference>
<reference key="11">
    <citation type="journal article" date="2024" name="J. Clin. Invest.">
        <title>The secreted micropeptide C4orf48 enhances renal fibrosis via an RNA-binding mechanism.</title>
        <authorList>
            <person name="Yang J."/>
            <person name="Zhuang H."/>
            <person name="Li J."/>
            <person name="Nunez-Nescolarde A.B."/>
            <person name="Luo N."/>
            <person name="Chen H."/>
            <person name="Li A."/>
            <person name="Qu X."/>
            <person name="Wang Q."/>
            <person name="Fan J."/>
            <person name="Bai X."/>
            <person name="Ye Z."/>
            <person name="Gu B."/>
            <person name="Meng Y."/>
            <person name="Zhang X."/>
            <person name="Wu D."/>
            <person name="Sia Y."/>
            <person name="Jiang X."/>
            <person name="Chen W."/>
            <person name="Combes A.N."/>
            <person name="Nikolic-Paterson D.J."/>
            <person name="Yu X."/>
        </authorList>
    </citation>
    <scope>FUNCTION</scope>
</reference>
<evidence type="ECO:0000250" key="1"/>
<evidence type="ECO:0000250" key="2">
    <source>
        <dbReference type="UniProtKB" id="P02786"/>
    </source>
</evidence>
<evidence type="ECO:0000255" key="3"/>
<evidence type="ECO:0000269" key="4">
    <source>
    </source>
</evidence>
<evidence type="ECO:0000269" key="5">
    <source>
    </source>
</evidence>
<evidence type="ECO:0000269" key="6">
    <source>
    </source>
</evidence>
<evidence type="ECO:0000269" key="7">
    <source>
    </source>
</evidence>
<evidence type="ECO:0000305" key="8"/>
<evidence type="ECO:0007744" key="9">
    <source>
    </source>
</evidence>
<evidence type="ECO:0007744" key="10">
    <source>
    </source>
</evidence>
<evidence type="ECO:0007744" key="11">
    <source>
    </source>
</evidence>
<name>TFR1_MOUSE</name>
<proteinExistence type="evidence at protein level"/>
<comment type="function">
    <text evidence="1 4 6 7">Cellular uptake of iron occurs via receptor-mediated endocytosis of ligand-occupied transferrin receptor into specialized endosomes (By similarity). Endosomal acidification leads to iron release. The apotransferrin-receptor complex is then recycled to the cell surface with a return to neutral pH and the concomitant loss of affinity of apotransferrin for its receptor. Transferrin receptor is necessary for development of erythrocytes and the nervous system (By similarity). Upon stimulation, positively regulates T and B cell proliferation through iron uptake (PubMed:26642240). Acts as a lipid sensor that regulates mitochondrial fusion by regulating activation of the JNK pathway (By similarity). When dietary levels of stearate (C18:0) are low, promotes activation of the JNK pathway, resulting in HUWE1-mediated ubiquitination and subsequent degradation of the mitofusin MFN2 and inhibition of mitochondrial fusion (By similarity). When dietary levels of stearate (C18:0) are high, TFRC stearoylation inhibits activation of the JNK pathway and thus degradation of the mitofusin MFN2 (By similarity). Mediates uptake of NICOL1 into fibroblasts where it may regulate extracellular matrix production (PubMed:38625739).</text>
</comment>
<comment type="subunit">
    <text evidence="1 2">Homodimer; disulfide-linked. Binds one transferrin molecule per subunit. Interacts with SH3BP4 (By similarity). Interacts with STEAP3; facilitates TFRC endocytosis in erythroid precursor cells (By similarity).</text>
</comment>
<comment type="subcellular location">
    <subcellularLocation>
        <location evidence="2">Cell membrane</location>
        <topology evidence="2">Single-pass type II membrane protein</topology>
    </subcellularLocation>
    <subcellularLocation>
        <location evidence="2">Melanosome</location>
    </subcellularLocation>
</comment>
<comment type="PTM">
    <text evidence="2">Stearoylated by ZDHHC6 which inhibits TFRC-mediated activation of the JNK pathway and promotes mitochondrial fragmentation (By similarity). Stearoylation does not affect iron uptake (By similarity).</text>
</comment>
<comment type="PTM">
    <text evidence="1">N- and O-glycosylated, phosphorylated and palmitoylated.</text>
</comment>
<comment type="similarity">
    <text evidence="8">Belongs to the peptidase M28 family. M28B subfamily.</text>
</comment>
<keyword id="KW-1003">Cell membrane</keyword>
<keyword id="KW-0903">Direct protein sequencing</keyword>
<keyword id="KW-1015">Disulfide bond</keyword>
<keyword id="KW-0254">Endocytosis</keyword>
<keyword id="KW-0325">Glycoprotein</keyword>
<keyword id="KW-0449">Lipoprotein</keyword>
<keyword id="KW-0472">Membrane</keyword>
<keyword id="KW-0564">Palmitate</keyword>
<keyword id="KW-0597">Phosphoprotein</keyword>
<keyword id="KW-0675">Receptor</keyword>
<keyword id="KW-1185">Reference proteome</keyword>
<keyword id="KW-0735">Signal-anchor</keyword>
<keyword id="KW-0812">Transmembrane</keyword>
<keyword id="KW-1133">Transmembrane helix</keyword>